<gene>
    <name evidence="1" type="primary">ecfA3</name>
    <name type="synonym">cbiO3</name>
    <name type="ordered locus">OEOE_1087</name>
</gene>
<evidence type="ECO:0000255" key="1">
    <source>
        <dbReference type="HAMAP-Rule" id="MF_01710"/>
    </source>
</evidence>
<dbReference type="EC" id="7.-.-.-" evidence="1"/>
<dbReference type="EMBL" id="CP000411">
    <property type="protein sequence ID" value="ABJ56988.1"/>
    <property type="molecule type" value="Genomic_DNA"/>
</dbReference>
<dbReference type="RefSeq" id="WP_002821316.1">
    <property type="nucleotide sequence ID" value="NC_008528.1"/>
</dbReference>
<dbReference type="SMR" id="Q04EY4"/>
<dbReference type="STRING" id="203123.OEOE_1087"/>
<dbReference type="KEGG" id="ooe:OEOE_1087"/>
<dbReference type="eggNOG" id="COG1122">
    <property type="taxonomic scope" value="Bacteria"/>
</dbReference>
<dbReference type="HOGENOM" id="CLU_000604_1_22_9"/>
<dbReference type="Proteomes" id="UP000000774">
    <property type="component" value="Chromosome"/>
</dbReference>
<dbReference type="GO" id="GO:0043190">
    <property type="term" value="C:ATP-binding cassette (ABC) transporter complex"/>
    <property type="evidence" value="ECO:0007669"/>
    <property type="project" value="TreeGrafter"/>
</dbReference>
<dbReference type="GO" id="GO:0005524">
    <property type="term" value="F:ATP binding"/>
    <property type="evidence" value="ECO:0007669"/>
    <property type="project" value="UniProtKB-KW"/>
</dbReference>
<dbReference type="GO" id="GO:0016887">
    <property type="term" value="F:ATP hydrolysis activity"/>
    <property type="evidence" value="ECO:0007669"/>
    <property type="project" value="InterPro"/>
</dbReference>
<dbReference type="GO" id="GO:0042626">
    <property type="term" value="F:ATPase-coupled transmembrane transporter activity"/>
    <property type="evidence" value="ECO:0007669"/>
    <property type="project" value="TreeGrafter"/>
</dbReference>
<dbReference type="CDD" id="cd03225">
    <property type="entry name" value="ABC_cobalt_CbiO_domain1"/>
    <property type="match status" value="1"/>
</dbReference>
<dbReference type="FunFam" id="3.40.50.300:FF:000224">
    <property type="entry name" value="Energy-coupling factor transporter ATP-binding protein EcfA"/>
    <property type="match status" value="1"/>
</dbReference>
<dbReference type="Gene3D" id="3.40.50.300">
    <property type="entry name" value="P-loop containing nucleotide triphosphate hydrolases"/>
    <property type="match status" value="1"/>
</dbReference>
<dbReference type="InterPro" id="IPR003593">
    <property type="entry name" value="AAA+_ATPase"/>
</dbReference>
<dbReference type="InterPro" id="IPR003439">
    <property type="entry name" value="ABC_transporter-like_ATP-bd"/>
</dbReference>
<dbReference type="InterPro" id="IPR017871">
    <property type="entry name" value="ABC_transporter-like_CS"/>
</dbReference>
<dbReference type="InterPro" id="IPR015856">
    <property type="entry name" value="ABC_transpr_CbiO/EcfA_su"/>
</dbReference>
<dbReference type="InterPro" id="IPR050095">
    <property type="entry name" value="ECF_ABC_transporter_ATP-bd"/>
</dbReference>
<dbReference type="InterPro" id="IPR030946">
    <property type="entry name" value="EcfA2"/>
</dbReference>
<dbReference type="InterPro" id="IPR027417">
    <property type="entry name" value="P-loop_NTPase"/>
</dbReference>
<dbReference type="NCBIfam" id="TIGR04521">
    <property type="entry name" value="ECF_ATPase_2"/>
    <property type="match status" value="1"/>
</dbReference>
<dbReference type="PANTHER" id="PTHR43553:SF27">
    <property type="entry name" value="ENERGY-COUPLING FACTOR TRANSPORTER ATP-BINDING PROTEIN ECFA2"/>
    <property type="match status" value="1"/>
</dbReference>
<dbReference type="PANTHER" id="PTHR43553">
    <property type="entry name" value="HEAVY METAL TRANSPORTER"/>
    <property type="match status" value="1"/>
</dbReference>
<dbReference type="Pfam" id="PF00005">
    <property type="entry name" value="ABC_tran"/>
    <property type="match status" value="1"/>
</dbReference>
<dbReference type="SMART" id="SM00382">
    <property type="entry name" value="AAA"/>
    <property type="match status" value="1"/>
</dbReference>
<dbReference type="SUPFAM" id="SSF52540">
    <property type="entry name" value="P-loop containing nucleoside triphosphate hydrolases"/>
    <property type="match status" value="1"/>
</dbReference>
<dbReference type="PROSITE" id="PS00211">
    <property type="entry name" value="ABC_TRANSPORTER_1"/>
    <property type="match status" value="1"/>
</dbReference>
<dbReference type="PROSITE" id="PS50893">
    <property type="entry name" value="ABC_TRANSPORTER_2"/>
    <property type="match status" value="1"/>
</dbReference>
<dbReference type="PROSITE" id="PS51246">
    <property type="entry name" value="CBIO"/>
    <property type="match status" value="1"/>
</dbReference>
<reference key="1">
    <citation type="journal article" date="2006" name="Proc. Natl. Acad. Sci. U.S.A.">
        <title>Comparative genomics of the lactic acid bacteria.</title>
        <authorList>
            <person name="Makarova K.S."/>
            <person name="Slesarev A."/>
            <person name="Wolf Y.I."/>
            <person name="Sorokin A."/>
            <person name="Mirkin B."/>
            <person name="Koonin E.V."/>
            <person name="Pavlov A."/>
            <person name="Pavlova N."/>
            <person name="Karamychev V."/>
            <person name="Polouchine N."/>
            <person name="Shakhova V."/>
            <person name="Grigoriev I."/>
            <person name="Lou Y."/>
            <person name="Rohksar D."/>
            <person name="Lucas S."/>
            <person name="Huang K."/>
            <person name="Goodstein D.M."/>
            <person name="Hawkins T."/>
            <person name="Plengvidhya V."/>
            <person name="Welker D."/>
            <person name="Hughes J."/>
            <person name="Goh Y."/>
            <person name="Benson A."/>
            <person name="Baldwin K."/>
            <person name="Lee J.-H."/>
            <person name="Diaz-Muniz I."/>
            <person name="Dosti B."/>
            <person name="Smeianov V."/>
            <person name="Wechter W."/>
            <person name="Barabote R."/>
            <person name="Lorca G."/>
            <person name="Altermann E."/>
            <person name="Barrangou R."/>
            <person name="Ganesan B."/>
            <person name="Xie Y."/>
            <person name="Rawsthorne H."/>
            <person name="Tamir D."/>
            <person name="Parker C."/>
            <person name="Breidt F."/>
            <person name="Broadbent J.R."/>
            <person name="Hutkins R."/>
            <person name="O'Sullivan D."/>
            <person name="Steele J."/>
            <person name="Unlu G."/>
            <person name="Saier M.H. Jr."/>
            <person name="Klaenhammer T."/>
            <person name="Richardson P."/>
            <person name="Kozyavkin S."/>
            <person name="Weimer B.C."/>
            <person name="Mills D.A."/>
        </authorList>
    </citation>
    <scope>NUCLEOTIDE SEQUENCE [LARGE SCALE GENOMIC DNA]</scope>
    <source>
        <strain>ATCC BAA-331 / PSU-1</strain>
    </source>
</reference>
<accession>Q04EY4</accession>
<comment type="function">
    <text evidence="1">ATP-binding (A) component of a common energy-coupling factor (ECF) ABC-transporter complex. Unlike classic ABC transporters this ECF transporter provides the energy necessary to transport a number of different substrates.</text>
</comment>
<comment type="subunit">
    <text evidence="1">Forms a stable energy-coupling factor (ECF) transporter complex composed of 2 membrane-embedded substrate-binding proteins (S component), 2 ATP-binding proteins (A component) and 2 transmembrane proteins (T component).</text>
</comment>
<comment type="subcellular location">
    <subcellularLocation>
        <location evidence="1">Cell membrane</location>
        <topology evidence="1">Peripheral membrane protein</topology>
    </subcellularLocation>
</comment>
<comment type="similarity">
    <text evidence="1">Belongs to the ABC transporter superfamily. Energy-coupling factor EcfA family.</text>
</comment>
<feature type="chain" id="PRO_0000287978" description="Energy-coupling factor transporter ATP-binding protein EcfA3">
    <location>
        <begin position="1"/>
        <end position="288"/>
    </location>
</feature>
<feature type="domain" description="ABC transporter" evidence="1">
    <location>
        <begin position="3"/>
        <end position="245"/>
    </location>
</feature>
<feature type="binding site" evidence="1">
    <location>
        <begin position="40"/>
        <end position="47"/>
    </location>
    <ligand>
        <name>ATP</name>
        <dbReference type="ChEBI" id="CHEBI:30616"/>
    </ligand>
</feature>
<proteinExistence type="inferred from homology"/>
<sequence length="288" mass="32343">MEINFRNVSFSYQLNTPFSTAALKDVSFDIPDGSFTSIVGHTGSGKSTVLQLIDGLLIPEKGHIQAGSFQMNSGSNAKHLKKFRKNVGFIFQFSENQLFEETVEKDLIFGPKNFGVEEKIAKEKARKVLKIVNLPESFLQKSPLDLSGGQRRRVAIASILISDPQLLLLDEPVIGLDPGSKDEIMNLFSRLNQQGKTIVMVSHEMDDVADYSDQIIVLNAGRISKVGSPEEIFSDESYLRKEKLRLPSAIDFAKQLKKVGFPINVSIKNKRELLREIKKQFEIEKDKK</sequence>
<name>ECFA3_OENOB</name>
<keyword id="KW-0067">ATP-binding</keyword>
<keyword id="KW-1003">Cell membrane</keyword>
<keyword id="KW-0472">Membrane</keyword>
<keyword id="KW-0547">Nucleotide-binding</keyword>
<keyword id="KW-1185">Reference proteome</keyword>
<keyword id="KW-1278">Translocase</keyword>
<keyword id="KW-0813">Transport</keyword>
<organism>
    <name type="scientific">Oenococcus oeni (strain ATCC BAA-331 / PSU-1)</name>
    <dbReference type="NCBI Taxonomy" id="203123"/>
    <lineage>
        <taxon>Bacteria</taxon>
        <taxon>Bacillati</taxon>
        <taxon>Bacillota</taxon>
        <taxon>Bacilli</taxon>
        <taxon>Lactobacillales</taxon>
        <taxon>Lactobacillaceae</taxon>
        <taxon>Oenococcus</taxon>
    </lineage>
</organism>
<protein>
    <recommendedName>
        <fullName evidence="1">Energy-coupling factor transporter ATP-binding protein EcfA3</fullName>
        <shortName evidence="1">ECF transporter A component EcfA3</shortName>
        <ecNumber evidence="1">7.-.-.-</ecNumber>
    </recommendedName>
</protein>